<organism>
    <name type="scientific">Streptococcus equi subsp. zooepidemicus (strain H70)</name>
    <dbReference type="NCBI Taxonomy" id="553483"/>
    <lineage>
        <taxon>Bacteria</taxon>
        <taxon>Bacillati</taxon>
        <taxon>Bacillota</taxon>
        <taxon>Bacilli</taxon>
        <taxon>Lactobacillales</taxon>
        <taxon>Streptococcaceae</taxon>
        <taxon>Streptococcus</taxon>
    </lineage>
</organism>
<dbReference type="EC" id="2.1.1.-" evidence="1"/>
<dbReference type="EMBL" id="FM204884">
    <property type="protein sequence ID" value="CAW97890.1"/>
    <property type="molecule type" value="Genomic_DNA"/>
</dbReference>
<dbReference type="SMR" id="C0MF82"/>
<dbReference type="KEGG" id="seq:SZO_01830"/>
<dbReference type="eggNOG" id="COG2264">
    <property type="taxonomic scope" value="Bacteria"/>
</dbReference>
<dbReference type="HOGENOM" id="CLU_049382_0_1_9"/>
<dbReference type="Proteomes" id="UP000001368">
    <property type="component" value="Chromosome"/>
</dbReference>
<dbReference type="GO" id="GO:0005737">
    <property type="term" value="C:cytoplasm"/>
    <property type="evidence" value="ECO:0007669"/>
    <property type="project" value="UniProtKB-SubCell"/>
</dbReference>
<dbReference type="GO" id="GO:0016279">
    <property type="term" value="F:protein-lysine N-methyltransferase activity"/>
    <property type="evidence" value="ECO:0007669"/>
    <property type="project" value="RHEA"/>
</dbReference>
<dbReference type="GO" id="GO:0032259">
    <property type="term" value="P:methylation"/>
    <property type="evidence" value="ECO:0007669"/>
    <property type="project" value="UniProtKB-KW"/>
</dbReference>
<dbReference type="CDD" id="cd02440">
    <property type="entry name" value="AdoMet_MTases"/>
    <property type="match status" value="1"/>
</dbReference>
<dbReference type="Gene3D" id="3.40.50.150">
    <property type="entry name" value="Vaccinia Virus protein VP39"/>
    <property type="match status" value="1"/>
</dbReference>
<dbReference type="HAMAP" id="MF_00735">
    <property type="entry name" value="Methyltr_PrmA"/>
    <property type="match status" value="1"/>
</dbReference>
<dbReference type="InterPro" id="IPR050078">
    <property type="entry name" value="Ribosomal_L11_MeTrfase_PrmA"/>
</dbReference>
<dbReference type="InterPro" id="IPR004498">
    <property type="entry name" value="Ribosomal_PrmA_MeTrfase"/>
</dbReference>
<dbReference type="InterPro" id="IPR029063">
    <property type="entry name" value="SAM-dependent_MTases_sf"/>
</dbReference>
<dbReference type="NCBIfam" id="TIGR00406">
    <property type="entry name" value="prmA"/>
    <property type="match status" value="1"/>
</dbReference>
<dbReference type="PANTHER" id="PTHR43648">
    <property type="entry name" value="ELECTRON TRANSFER FLAVOPROTEIN BETA SUBUNIT LYSINE METHYLTRANSFERASE"/>
    <property type="match status" value="1"/>
</dbReference>
<dbReference type="PANTHER" id="PTHR43648:SF1">
    <property type="entry name" value="ELECTRON TRANSFER FLAVOPROTEIN BETA SUBUNIT LYSINE METHYLTRANSFERASE"/>
    <property type="match status" value="1"/>
</dbReference>
<dbReference type="Pfam" id="PF06325">
    <property type="entry name" value="PrmA"/>
    <property type="match status" value="1"/>
</dbReference>
<dbReference type="PIRSF" id="PIRSF000401">
    <property type="entry name" value="RPL11_MTase"/>
    <property type="match status" value="1"/>
</dbReference>
<dbReference type="SUPFAM" id="SSF53335">
    <property type="entry name" value="S-adenosyl-L-methionine-dependent methyltransferases"/>
    <property type="match status" value="1"/>
</dbReference>
<reference key="1">
    <citation type="journal article" date="2009" name="PLoS Pathog.">
        <title>Genomic evidence for the evolution of Streptococcus equi: host restriction, increased virulence, and genetic exchange with human pathogens.</title>
        <authorList>
            <person name="Holden M.T.G."/>
            <person name="Heather Z."/>
            <person name="Paillot R."/>
            <person name="Steward K.F."/>
            <person name="Webb K."/>
            <person name="Ainslie F."/>
            <person name="Jourdan T."/>
            <person name="Bason N.C."/>
            <person name="Holroyd N.E."/>
            <person name="Mungall K."/>
            <person name="Quail M.A."/>
            <person name="Sanders M."/>
            <person name="Simmonds M."/>
            <person name="Willey D."/>
            <person name="Brooks K."/>
            <person name="Aanensen D.M."/>
            <person name="Spratt B.G."/>
            <person name="Jolley K.A."/>
            <person name="Maiden M.C.J."/>
            <person name="Kehoe M."/>
            <person name="Chanter N."/>
            <person name="Bentley S.D."/>
            <person name="Robinson C."/>
            <person name="Maskell D.J."/>
            <person name="Parkhill J."/>
            <person name="Waller A.S."/>
        </authorList>
    </citation>
    <scope>NUCLEOTIDE SEQUENCE [LARGE SCALE GENOMIC DNA]</scope>
    <source>
        <strain>H70</strain>
    </source>
</reference>
<proteinExistence type="inferred from homology"/>
<evidence type="ECO:0000255" key="1">
    <source>
        <dbReference type="HAMAP-Rule" id="MF_00735"/>
    </source>
</evidence>
<keyword id="KW-0963">Cytoplasm</keyword>
<keyword id="KW-0489">Methyltransferase</keyword>
<keyword id="KW-0949">S-adenosyl-L-methionine</keyword>
<keyword id="KW-0808">Transferase</keyword>
<gene>
    <name evidence="1" type="primary">prmA</name>
    <name type="ordered locus">SZO_01830</name>
</gene>
<feature type="chain" id="PRO_1000212758" description="Ribosomal protein L11 methyltransferase">
    <location>
        <begin position="1"/>
        <end position="317"/>
    </location>
</feature>
<feature type="binding site" evidence="1">
    <location>
        <position position="158"/>
    </location>
    <ligand>
        <name>S-adenosyl-L-methionine</name>
        <dbReference type="ChEBI" id="CHEBI:59789"/>
    </ligand>
</feature>
<feature type="binding site" evidence="1">
    <location>
        <position position="179"/>
    </location>
    <ligand>
        <name>S-adenosyl-L-methionine</name>
        <dbReference type="ChEBI" id="CHEBI:59789"/>
    </ligand>
</feature>
<feature type="binding site" evidence="1">
    <location>
        <position position="201"/>
    </location>
    <ligand>
        <name>S-adenosyl-L-methionine</name>
        <dbReference type="ChEBI" id="CHEBI:59789"/>
    </ligand>
</feature>
<feature type="binding site" evidence="1">
    <location>
        <position position="244"/>
    </location>
    <ligand>
        <name>S-adenosyl-L-methionine</name>
        <dbReference type="ChEBI" id="CHEBI:59789"/>
    </ligand>
</feature>
<protein>
    <recommendedName>
        <fullName evidence="1">Ribosomal protein L11 methyltransferase</fullName>
        <shortName evidence="1">L11 Mtase</shortName>
        <ecNumber evidence="1">2.1.1.-</ecNumber>
    </recommendedName>
</protein>
<accession>C0MF82</accession>
<sequence>MKAWQELTITVHREAEEAVSNLLIEAGSQGVAINDTADYIGQENRFGELYPAVEQSEMVTITAYYPNSADIDDIRQTINQGLSRLKQCDVELGELTLTNQELAEEDWADNWKAYYEPARITHDLTIVPSWTDYEATAGEKIIRLDPGMAFGTGTHPTTKLSLFALEQVLRGGETVIDVGTGSGVLSIASSLLGAKEVFAYDLDDVAVRVAKDNIALNQATDNIHVAAGDLLKGLTQEADVIVANILADILVHVTADAYRLVKDEGYLIMSGIISEKLDMVKQAALNAGFLLETHMLQGEWNALIFKKTDDLSGVIGG</sequence>
<name>PRMA_STRS7</name>
<comment type="function">
    <text evidence="1">Methylates ribosomal protein L11.</text>
</comment>
<comment type="catalytic activity">
    <reaction evidence="1">
        <text>L-lysyl-[protein] + 3 S-adenosyl-L-methionine = N(6),N(6),N(6)-trimethyl-L-lysyl-[protein] + 3 S-adenosyl-L-homocysteine + 3 H(+)</text>
        <dbReference type="Rhea" id="RHEA:54192"/>
        <dbReference type="Rhea" id="RHEA-COMP:9752"/>
        <dbReference type="Rhea" id="RHEA-COMP:13826"/>
        <dbReference type="ChEBI" id="CHEBI:15378"/>
        <dbReference type="ChEBI" id="CHEBI:29969"/>
        <dbReference type="ChEBI" id="CHEBI:57856"/>
        <dbReference type="ChEBI" id="CHEBI:59789"/>
        <dbReference type="ChEBI" id="CHEBI:61961"/>
    </reaction>
</comment>
<comment type="subcellular location">
    <subcellularLocation>
        <location evidence="1">Cytoplasm</location>
    </subcellularLocation>
</comment>
<comment type="similarity">
    <text evidence="1">Belongs to the methyltransferase superfamily. PrmA family.</text>
</comment>